<proteinExistence type="inferred from homology"/>
<gene>
    <name type="ORF">BRAFLDRAFT_59218</name>
</gene>
<dbReference type="EMBL" id="GG666469">
    <property type="protein sequence ID" value="EEN67878.1"/>
    <property type="molecule type" value="Genomic_DNA"/>
</dbReference>
<dbReference type="RefSeq" id="XP_002611869.1">
    <property type="nucleotide sequence ID" value="XM_002611823.1"/>
</dbReference>
<dbReference type="SMR" id="C3XVT5"/>
<dbReference type="FunCoup" id="C3XVT5">
    <property type="interactions" value="902"/>
</dbReference>
<dbReference type="STRING" id="7739.C3XVT5"/>
<dbReference type="eggNOG" id="KOG0295">
    <property type="taxonomic scope" value="Eukaryota"/>
</dbReference>
<dbReference type="InParanoid" id="C3XVT5"/>
<dbReference type="OMA" id="WHVATKE"/>
<dbReference type="OrthoDB" id="674604at2759"/>
<dbReference type="Proteomes" id="UP000001554">
    <property type="component" value="Unplaced"/>
</dbReference>
<dbReference type="GO" id="GO:1904115">
    <property type="term" value="C:axon cytoplasm"/>
    <property type="evidence" value="ECO:0007669"/>
    <property type="project" value="GOC"/>
</dbReference>
<dbReference type="GO" id="GO:0005813">
    <property type="term" value="C:centrosome"/>
    <property type="evidence" value="ECO:0007669"/>
    <property type="project" value="UniProtKB-SubCell"/>
</dbReference>
<dbReference type="GO" id="GO:0005881">
    <property type="term" value="C:cytoplasmic microtubule"/>
    <property type="evidence" value="ECO:0000318"/>
    <property type="project" value="GO_Central"/>
</dbReference>
<dbReference type="GO" id="GO:0000776">
    <property type="term" value="C:kinetochore"/>
    <property type="evidence" value="ECO:0000318"/>
    <property type="project" value="GO_Central"/>
</dbReference>
<dbReference type="GO" id="GO:0005875">
    <property type="term" value="C:microtubule associated complex"/>
    <property type="evidence" value="ECO:0000318"/>
    <property type="project" value="GO_Central"/>
</dbReference>
<dbReference type="GO" id="GO:0043005">
    <property type="term" value="C:neuron projection"/>
    <property type="evidence" value="ECO:0000318"/>
    <property type="project" value="GO_Central"/>
</dbReference>
<dbReference type="GO" id="GO:0043025">
    <property type="term" value="C:neuronal cell body"/>
    <property type="evidence" value="ECO:0000318"/>
    <property type="project" value="GO_Central"/>
</dbReference>
<dbReference type="GO" id="GO:0005635">
    <property type="term" value="C:nuclear envelope"/>
    <property type="evidence" value="ECO:0000318"/>
    <property type="project" value="GO_Central"/>
</dbReference>
<dbReference type="GO" id="GO:0070840">
    <property type="term" value="F:dynein complex binding"/>
    <property type="evidence" value="ECO:0000318"/>
    <property type="project" value="GO_Central"/>
</dbReference>
<dbReference type="GO" id="GO:0051010">
    <property type="term" value="F:microtubule plus-end binding"/>
    <property type="evidence" value="ECO:0000318"/>
    <property type="project" value="GO_Central"/>
</dbReference>
<dbReference type="GO" id="GO:0048854">
    <property type="term" value="P:brain morphogenesis"/>
    <property type="evidence" value="ECO:0000318"/>
    <property type="project" value="GO_Central"/>
</dbReference>
<dbReference type="GO" id="GO:0051301">
    <property type="term" value="P:cell division"/>
    <property type="evidence" value="ECO:0007669"/>
    <property type="project" value="UniProtKB-KW"/>
</dbReference>
<dbReference type="GO" id="GO:0000132">
    <property type="term" value="P:establishment of mitotic spindle orientation"/>
    <property type="evidence" value="ECO:0000318"/>
    <property type="project" value="GO_Central"/>
</dbReference>
<dbReference type="GO" id="GO:0007281">
    <property type="term" value="P:germ cell development"/>
    <property type="evidence" value="ECO:0000318"/>
    <property type="project" value="GO_Central"/>
</dbReference>
<dbReference type="GO" id="GO:0031023">
    <property type="term" value="P:microtubule organizing center organization"/>
    <property type="evidence" value="ECO:0000318"/>
    <property type="project" value="GO_Central"/>
</dbReference>
<dbReference type="GO" id="GO:0051012">
    <property type="term" value="P:microtubule sliding"/>
    <property type="evidence" value="ECO:0007669"/>
    <property type="project" value="UniProtKB-UniRule"/>
</dbReference>
<dbReference type="GO" id="GO:0007097">
    <property type="term" value="P:nuclear migration"/>
    <property type="evidence" value="ECO:0000318"/>
    <property type="project" value="GO_Central"/>
</dbReference>
<dbReference type="GO" id="GO:0008090">
    <property type="term" value="P:retrograde axonal transport"/>
    <property type="evidence" value="ECO:0000318"/>
    <property type="project" value="GO_Central"/>
</dbReference>
<dbReference type="GO" id="GO:0047496">
    <property type="term" value="P:vesicle transport along microtubule"/>
    <property type="evidence" value="ECO:0000318"/>
    <property type="project" value="GO_Central"/>
</dbReference>
<dbReference type="CDD" id="cd00200">
    <property type="entry name" value="WD40"/>
    <property type="match status" value="1"/>
</dbReference>
<dbReference type="FunFam" id="2.130.10.10:FF:000038">
    <property type="entry name" value="Lissencephaly-1 homolog B"/>
    <property type="match status" value="1"/>
</dbReference>
<dbReference type="FunFam" id="1.20.960.30:FF:000002">
    <property type="entry name" value="Platelet-activating factor acetylhydrolase ib"/>
    <property type="match status" value="1"/>
</dbReference>
<dbReference type="Gene3D" id="1.20.960.30">
    <property type="match status" value="1"/>
</dbReference>
<dbReference type="Gene3D" id="2.130.10.10">
    <property type="entry name" value="YVTN repeat-like/Quinoprotein amine dehydrogenase"/>
    <property type="match status" value="1"/>
</dbReference>
<dbReference type="HAMAP" id="MF_03141">
    <property type="entry name" value="lis1"/>
    <property type="match status" value="1"/>
</dbReference>
<dbReference type="InterPro" id="IPR017252">
    <property type="entry name" value="Dynein_regulator_LIS1"/>
</dbReference>
<dbReference type="InterPro" id="IPR020472">
    <property type="entry name" value="G-protein_beta_WD-40_rep"/>
</dbReference>
<dbReference type="InterPro" id="IPR037190">
    <property type="entry name" value="LIS1_N"/>
</dbReference>
<dbReference type="InterPro" id="IPR006594">
    <property type="entry name" value="LisH"/>
</dbReference>
<dbReference type="InterPro" id="IPR056795">
    <property type="entry name" value="PAC1-like_LisH-like_dom"/>
</dbReference>
<dbReference type="InterPro" id="IPR015943">
    <property type="entry name" value="WD40/YVTN_repeat-like_dom_sf"/>
</dbReference>
<dbReference type="InterPro" id="IPR019775">
    <property type="entry name" value="WD40_repeat_CS"/>
</dbReference>
<dbReference type="InterPro" id="IPR036322">
    <property type="entry name" value="WD40_repeat_dom_sf"/>
</dbReference>
<dbReference type="InterPro" id="IPR001680">
    <property type="entry name" value="WD40_rpt"/>
</dbReference>
<dbReference type="InterPro" id="IPR050349">
    <property type="entry name" value="WD_LIS1/nudF_dynein_reg"/>
</dbReference>
<dbReference type="PANTHER" id="PTHR44129">
    <property type="entry name" value="WD REPEAT-CONTAINING PROTEIN POP1"/>
    <property type="match status" value="1"/>
</dbReference>
<dbReference type="Pfam" id="PF24951">
    <property type="entry name" value="LisH_PAC1"/>
    <property type="match status" value="1"/>
</dbReference>
<dbReference type="Pfam" id="PF00400">
    <property type="entry name" value="WD40"/>
    <property type="match status" value="7"/>
</dbReference>
<dbReference type="PIRSF" id="PIRSF037647">
    <property type="entry name" value="Dynein_regulator_Lis1"/>
    <property type="match status" value="1"/>
</dbReference>
<dbReference type="PRINTS" id="PR00320">
    <property type="entry name" value="GPROTEINBRPT"/>
</dbReference>
<dbReference type="SMART" id="SM00667">
    <property type="entry name" value="LisH"/>
    <property type="match status" value="1"/>
</dbReference>
<dbReference type="SMART" id="SM00320">
    <property type="entry name" value="WD40"/>
    <property type="match status" value="7"/>
</dbReference>
<dbReference type="SUPFAM" id="SSF109925">
    <property type="entry name" value="Lissencephaly-1 protein (Lis-1, PAF-AH alpha) N-terminal domain"/>
    <property type="match status" value="1"/>
</dbReference>
<dbReference type="SUPFAM" id="SSF50978">
    <property type="entry name" value="WD40 repeat-like"/>
    <property type="match status" value="1"/>
</dbReference>
<dbReference type="PROSITE" id="PS50896">
    <property type="entry name" value="LISH"/>
    <property type="match status" value="1"/>
</dbReference>
<dbReference type="PROSITE" id="PS00678">
    <property type="entry name" value="WD_REPEATS_1"/>
    <property type="match status" value="4"/>
</dbReference>
<dbReference type="PROSITE" id="PS50082">
    <property type="entry name" value="WD_REPEATS_2"/>
    <property type="match status" value="7"/>
</dbReference>
<dbReference type="PROSITE" id="PS50294">
    <property type="entry name" value="WD_REPEATS_REGION"/>
    <property type="match status" value="1"/>
</dbReference>
<sequence>MVLSQRQREELNKAIADYLRSNGYESALEAFQKEAEMPGEIEKKYTGLLEKKWTSVIRLQKKVMDLEAKLAEAEKEFQSGGPNKKERSPSEWIPRPPARYSLSGHRSPITRVLFHPVYSVMVSASEDATIKIWDYETGDFERTLKGHTDAVQDVSFDQQGKLLASCSADMTIKLWDFQTFENIKTMHGHDHNVSSVHFMPNGDFLISASRDKTIKMWELATGYCVKTFTGHREWVRTVRVNQDGSLLASCSNDQTVRVWVVANKECKAELREHEHVVECIAWAPESCNGHVSEVMGAEKKGRSGPFLLSGSRDKTIKMWDISTGVCIMTLVGHDNWVRGVVWHPGGKYIISASDDKTIRVWDYKNKRCQKTLEAHQHFCTSIDFHRSAPYVITGSVDQTVKVWECR</sequence>
<feature type="chain" id="PRO_0000405038" description="Lissencephaly-1 homolog">
    <location>
        <begin position="1"/>
        <end position="406"/>
    </location>
</feature>
<feature type="domain" description="LisH" evidence="1">
    <location>
        <begin position="7"/>
        <end position="39"/>
    </location>
</feature>
<feature type="repeat" description="WD 1">
    <location>
        <begin position="104"/>
        <end position="145"/>
    </location>
</feature>
<feature type="repeat" description="WD 2">
    <location>
        <begin position="146"/>
        <end position="185"/>
    </location>
</feature>
<feature type="repeat" description="WD 3">
    <location>
        <begin position="188"/>
        <end position="227"/>
    </location>
</feature>
<feature type="repeat" description="WD 4">
    <location>
        <begin position="230"/>
        <end position="269"/>
    </location>
</feature>
<feature type="repeat" description="WD 5">
    <location>
        <begin position="272"/>
        <end position="329"/>
    </location>
</feature>
<feature type="repeat" description="WD 6">
    <location>
        <begin position="332"/>
        <end position="371"/>
    </location>
</feature>
<feature type="repeat" description="WD 7">
    <location>
        <begin position="374"/>
        <end position="406"/>
    </location>
</feature>
<feature type="region of interest" description="Disordered" evidence="2">
    <location>
        <begin position="74"/>
        <end position="99"/>
    </location>
</feature>
<feature type="coiled-coil region" evidence="1">
    <location>
        <begin position="54"/>
        <end position="81"/>
    </location>
</feature>
<feature type="compositionally biased region" description="Basic and acidic residues" evidence="2">
    <location>
        <begin position="74"/>
        <end position="89"/>
    </location>
</feature>
<reference key="1">
    <citation type="journal article" date="2008" name="Nature">
        <title>The amphioxus genome and the evolution of the chordate karyotype.</title>
        <authorList>
            <person name="Putnam N.H."/>
            <person name="Butts T."/>
            <person name="Ferrier D.E.K."/>
            <person name="Furlong R.F."/>
            <person name="Hellsten U."/>
            <person name="Kawashima T."/>
            <person name="Robinson-Rechavi M."/>
            <person name="Shoguchi E."/>
            <person name="Terry A."/>
            <person name="Yu J.-K."/>
            <person name="Benito-Gutierrez E.L."/>
            <person name="Dubchak I."/>
            <person name="Garcia-Fernandez J."/>
            <person name="Gibson-Brown J.J."/>
            <person name="Grigoriev I.V."/>
            <person name="Horton A.C."/>
            <person name="de Jong P.J."/>
            <person name="Jurka J."/>
            <person name="Kapitonov V.V."/>
            <person name="Kohara Y."/>
            <person name="Kuroki Y."/>
            <person name="Lindquist E."/>
            <person name="Lucas S."/>
            <person name="Osoegawa K."/>
            <person name="Pennacchio L.A."/>
            <person name="Salamov A.A."/>
            <person name="Satou Y."/>
            <person name="Sauka-Spengler T."/>
            <person name="Schmutz J."/>
            <person name="Shin-I T."/>
            <person name="Toyoda A."/>
            <person name="Bronner-Fraser M."/>
            <person name="Fujiyama A."/>
            <person name="Holland L.Z."/>
            <person name="Holland P.W.H."/>
            <person name="Satoh N."/>
            <person name="Rokhsar D.S."/>
        </authorList>
    </citation>
    <scope>NUCLEOTIDE SEQUENCE [LARGE SCALE GENOMIC DNA]</scope>
    <source>
        <strain>S238N-H82</strain>
        <tissue>Testis</tissue>
    </source>
</reference>
<keyword id="KW-0131">Cell cycle</keyword>
<keyword id="KW-0132">Cell division</keyword>
<keyword id="KW-0175">Coiled coil</keyword>
<keyword id="KW-0963">Cytoplasm</keyword>
<keyword id="KW-0206">Cytoskeleton</keyword>
<keyword id="KW-0493">Microtubule</keyword>
<keyword id="KW-0498">Mitosis</keyword>
<keyword id="KW-1185">Reference proteome</keyword>
<keyword id="KW-0677">Repeat</keyword>
<keyword id="KW-0813">Transport</keyword>
<keyword id="KW-0853">WD repeat</keyword>
<accession>C3XVT5</accession>
<evidence type="ECO:0000255" key="1">
    <source>
        <dbReference type="HAMAP-Rule" id="MF_03141"/>
    </source>
</evidence>
<evidence type="ECO:0000256" key="2">
    <source>
        <dbReference type="SAM" id="MobiDB-lite"/>
    </source>
</evidence>
<comment type="function">
    <text evidence="1">Positively regulates the activity of the minus-end directed microtubule motor protein dynein. May enhance dynein-mediated microtubule sliding by targeting dynein to the microtubule plus end. Required for several dynein- and microtubule-dependent processes.</text>
</comment>
<comment type="subcellular location">
    <subcellularLocation>
        <location evidence="1">Cytoplasm</location>
        <location evidence="1">Cytoskeleton</location>
    </subcellularLocation>
    <subcellularLocation>
        <location evidence="1">Cytoplasm</location>
        <location evidence="1">Cytoskeleton</location>
        <location evidence="1">Microtubule organizing center</location>
        <location evidence="1">Centrosome</location>
    </subcellularLocation>
    <text evidence="1">Localizes to the plus end of microtubules and to the centrosome.</text>
</comment>
<comment type="domain">
    <text evidence="1">Dimerization mediated by the LisH domain may be required to activate dynein.</text>
</comment>
<comment type="similarity">
    <text evidence="1">Belongs to the WD repeat LIS1/nudF family.</text>
</comment>
<name>LIS1_BRAFL</name>
<organism>
    <name type="scientific">Branchiostoma floridae</name>
    <name type="common">Florida lancelet</name>
    <name type="synonym">Amphioxus</name>
    <dbReference type="NCBI Taxonomy" id="7739"/>
    <lineage>
        <taxon>Eukaryota</taxon>
        <taxon>Metazoa</taxon>
        <taxon>Chordata</taxon>
        <taxon>Cephalochordata</taxon>
        <taxon>Leptocardii</taxon>
        <taxon>Amphioxiformes</taxon>
        <taxon>Branchiostomatidae</taxon>
        <taxon>Branchiostoma</taxon>
    </lineage>
</organism>
<protein>
    <recommendedName>
        <fullName evidence="1">Lissencephaly-1 homolog</fullName>
    </recommendedName>
</protein>